<accession>P13263</accession>
<keyword id="KW-0007">Acetylation</keyword>
<keyword id="KW-0966">Cell projection</keyword>
<keyword id="KW-0963">Cytoplasm</keyword>
<keyword id="KW-0206">Cytoskeleton</keyword>
<keyword id="KW-1185">Reference proteome</keyword>
<feature type="initiator methionine" description="Removed" evidence="1">
    <location>
        <position position="1"/>
    </location>
</feature>
<feature type="chain" id="PRO_0000213458" description="Major sperm protein 2">
    <location>
        <begin position="2"/>
        <end position="127"/>
    </location>
</feature>
<feature type="domain" description="MSP" evidence="2">
    <location>
        <begin position="9"/>
        <end position="126"/>
    </location>
</feature>
<feature type="modified residue" description="N-acetylalanine" evidence="1">
    <location>
        <position position="2"/>
    </location>
</feature>
<name>MSP2_ONCVO</name>
<organism>
    <name type="scientific">Onchocerca volvulus</name>
    <dbReference type="NCBI Taxonomy" id="6282"/>
    <lineage>
        <taxon>Eukaryota</taxon>
        <taxon>Metazoa</taxon>
        <taxon>Ecdysozoa</taxon>
        <taxon>Nematoda</taxon>
        <taxon>Chromadorea</taxon>
        <taxon>Rhabditida</taxon>
        <taxon>Spirurina</taxon>
        <taxon>Spiruromorpha</taxon>
        <taxon>Filarioidea</taxon>
        <taxon>Onchocercidae</taxon>
        <taxon>Onchocerca</taxon>
    </lineage>
</organism>
<dbReference type="EMBL" id="J04663">
    <property type="protein sequence ID" value="AAA29421.1"/>
    <property type="molecule type" value="Genomic_DNA"/>
</dbReference>
<dbReference type="PIR" id="B45528">
    <property type="entry name" value="B45528"/>
</dbReference>
<dbReference type="SMR" id="P13263"/>
<dbReference type="STRING" id="6282.P13263"/>
<dbReference type="HOGENOM" id="CLU_120664_0_1_1"/>
<dbReference type="Proteomes" id="UP000024404">
    <property type="component" value="Unassembled WGS sequence"/>
</dbReference>
<dbReference type="GO" id="GO:0005737">
    <property type="term" value="C:cytoplasm"/>
    <property type="evidence" value="ECO:0007669"/>
    <property type="project" value="UniProtKB-KW"/>
</dbReference>
<dbReference type="GO" id="GO:0005856">
    <property type="term" value="C:cytoskeleton"/>
    <property type="evidence" value="ECO:0007669"/>
    <property type="project" value="UniProtKB-SubCell"/>
</dbReference>
<dbReference type="GO" id="GO:0031143">
    <property type="term" value="C:pseudopodium"/>
    <property type="evidence" value="ECO:0007669"/>
    <property type="project" value="UniProtKB-SubCell"/>
</dbReference>
<dbReference type="FunFam" id="2.60.40.10:FF:001120">
    <property type="entry name" value="Major sperm protein 19/31/40/45/50/51/53/59/61/65/81/113/142"/>
    <property type="match status" value="1"/>
</dbReference>
<dbReference type="Gene3D" id="2.60.40.10">
    <property type="entry name" value="Immunoglobulins"/>
    <property type="match status" value="1"/>
</dbReference>
<dbReference type="InterPro" id="IPR013783">
    <property type="entry name" value="Ig-like_fold"/>
</dbReference>
<dbReference type="InterPro" id="IPR000535">
    <property type="entry name" value="MSP_dom"/>
</dbReference>
<dbReference type="InterPro" id="IPR051155">
    <property type="entry name" value="Nematode_MSP"/>
</dbReference>
<dbReference type="InterPro" id="IPR008962">
    <property type="entry name" value="PapD-like_sf"/>
</dbReference>
<dbReference type="PANTHER" id="PTHR22920">
    <property type="entry name" value="MAJOR SPERM PROTEIN"/>
    <property type="match status" value="1"/>
</dbReference>
<dbReference type="PANTHER" id="PTHR22920:SF7">
    <property type="entry name" value="MSP DOMAIN-CONTAINING PROTEIN-RELATED"/>
    <property type="match status" value="1"/>
</dbReference>
<dbReference type="Pfam" id="PF00635">
    <property type="entry name" value="Motile_Sperm"/>
    <property type="match status" value="1"/>
</dbReference>
<dbReference type="SUPFAM" id="SSF49354">
    <property type="entry name" value="PapD-like"/>
    <property type="match status" value="1"/>
</dbReference>
<dbReference type="PROSITE" id="PS50202">
    <property type="entry name" value="MSP"/>
    <property type="match status" value="1"/>
</dbReference>
<sequence length="127" mass="14356">MAQSVPPGDIHTQPGSKIVFNAPYDDKHTYHIKITNAGGRRIGWAIKTTNMKRLGVDPPCGVLDPKENVLMAVSCDTFDATREDINNDRITIEWTNTPDGAAKQFRREWFQGDGMVRRKNLPIEYNL</sequence>
<proteinExistence type="evidence at transcript level"/>
<reference key="1">
    <citation type="journal article" date="1989" name="Mol. Biochem. Parasitol.">
        <title>Major sperm protein genes from Onchocerca volvulus.</title>
        <authorList>
            <person name="Scott A.L."/>
            <person name="Dinman J."/>
            <person name="Sussman D.J."/>
            <person name="Yenbutr P."/>
            <person name="Ward S."/>
        </authorList>
    </citation>
    <scope>NUCLEOTIDE SEQUENCE [GENOMIC DNA]</scope>
</reference>
<evidence type="ECO:0000250" key="1"/>
<evidence type="ECO:0000255" key="2">
    <source>
        <dbReference type="PROSITE-ProRule" id="PRU00132"/>
    </source>
</evidence>
<protein>
    <recommendedName>
        <fullName>Major sperm protein 2</fullName>
        <shortName>MSP2</shortName>
    </recommendedName>
</protein>
<comment type="function">
    <text>Central component in molecular interactions underlying sperm crawling. Forms an extensive filament system that extends from sperm villipoda, along the leading edge of the pseudopod.</text>
</comment>
<comment type="subcellular location">
    <subcellularLocation>
        <location>Cell projection</location>
        <location>Pseudopodium</location>
    </subcellularLocation>
    <subcellularLocation>
        <location>Cytoplasm</location>
        <location>Cytoskeleton</location>
    </subcellularLocation>
</comment>
<comment type="tissue specificity">
    <text>Sperm.</text>
</comment>